<keyword id="KW-0217">Developmental protein</keyword>
<keyword id="KW-0238">DNA-binding</keyword>
<keyword id="KW-0371">Homeobox</keyword>
<keyword id="KW-0539">Nucleus</keyword>
<keyword id="KW-1185">Reference proteome</keyword>
<keyword id="KW-0804">Transcription</keyword>
<keyword id="KW-0805">Transcription regulation</keyword>
<accession>G3X9U1</accession>
<accession>A0PK85</accession>
<accession>Q8VHG3</accession>
<organism>
    <name type="scientific">Mus musculus</name>
    <name type="common">Mouse</name>
    <dbReference type="NCBI Taxonomy" id="10090"/>
    <lineage>
        <taxon>Eukaryota</taxon>
        <taxon>Metazoa</taxon>
        <taxon>Chordata</taxon>
        <taxon>Craniata</taxon>
        <taxon>Vertebrata</taxon>
        <taxon>Euteleostomi</taxon>
        <taxon>Mammalia</taxon>
        <taxon>Eutheria</taxon>
        <taxon>Euarchontoglires</taxon>
        <taxon>Glires</taxon>
        <taxon>Rodentia</taxon>
        <taxon>Myomorpha</taxon>
        <taxon>Muroidea</taxon>
        <taxon>Muridae</taxon>
        <taxon>Murinae</taxon>
        <taxon>Mus</taxon>
        <taxon>Mus</taxon>
    </lineage>
</organism>
<evidence type="ECO:0000250" key="1">
    <source>
        <dbReference type="UniProtKB" id="Q9D350"/>
    </source>
</evidence>
<evidence type="ECO:0000255" key="2">
    <source>
        <dbReference type="PROSITE-ProRule" id="PRU00108"/>
    </source>
</evidence>
<evidence type="ECO:0000256" key="3">
    <source>
        <dbReference type="SAM" id="MobiDB-lite"/>
    </source>
</evidence>
<evidence type="ECO:0000269" key="4">
    <source>
    </source>
</evidence>
<evidence type="ECO:0000269" key="5">
    <source>
    </source>
</evidence>
<evidence type="ECO:0000303" key="6">
    <source>
    </source>
</evidence>
<evidence type="ECO:0000305" key="7"/>
<evidence type="ECO:0000312" key="8">
    <source>
        <dbReference type="MGI" id="MGI:2149036"/>
    </source>
</evidence>
<protein>
    <recommendedName>
        <fullName evidence="7">Oocyte-specific homeobox protein 6</fullName>
    </recommendedName>
</protein>
<dbReference type="EMBL" id="AF461111">
    <property type="protein sequence ID" value="AAL68805.1"/>
    <property type="status" value="ALT_SEQ"/>
    <property type="molecule type" value="Genomic_DNA"/>
</dbReference>
<dbReference type="EMBL" id="BC128024">
    <property type="protein sequence ID" value="AAI28025.1"/>
    <property type="molecule type" value="mRNA"/>
</dbReference>
<dbReference type="CCDS" id="CCDS20839.2"/>
<dbReference type="RefSeq" id="NP_663756.2">
    <property type="nucleotide sequence ID" value="NM_145710.2"/>
</dbReference>
<dbReference type="SMR" id="G3X9U1"/>
<dbReference type="FunCoup" id="G3X9U1">
    <property type="interactions" value="5"/>
</dbReference>
<dbReference type="STRING" id="10090.ENSMUSP00000104153"/>
<dbReference type="PaxDb" id="10090-ENSMUSP00000104153"/>
<dbReference type="DNASU" id="252830"/>
<dbReference type="Ensembl" id="ENSMUST00000108513.5">
    <property type="protein sequence ID" value="ENSMUSP00000104153.4"/>
    <property type="gene ID" value="ENSMUSG00000041583.9"/>
</dbReference>
<dbReference type="GeneID" id="252830"/>
<dbReference type="KEGG" id="mmu:252830"/>
<dbReference type="UCSC" id="uc009fgk.1">
    <property type="organism name" value="mouse"/>
</dbReference>
<dbReference type="AGR" id="MGI:2149036"/>
<dbReference type="CTD" id="252830"/>
<dbReference type="MGI" id="MGI:2149036">
    <property type="gene designation" value="Obox6"/>
</dbReference>
<dbReference type="VEuPathDB" id="HostDB:ENSMUSG00000041583"/>
<dbReference type="eggNOG" id="KOG0488">
    <property type="taxonomic scope" value="Eukaryota"/>
</dbReference>
<dbReference type="GeneTree" id="ENSGT00390000000605"/>
<dbReference type="HOGENOM" id="CLU_956330_0_0_1"/>
<dbReference type="InParanoid" id="G3X9U1"/>
<dbReference type="OMA" id="PERDLCP"/>
<dbReference type="OrthoDB" id="9614843at2759"/>
<dbReference type="PhylomeDB" id="G3X9U1"/>
<dbReference type="TreeFam" id="TF339053"/>
<dbReference type="BioGRID-ORCS" id="252830">
    <property type="hits" value="3 hits in 76 CRISPR screens"/>
</dbReference>
<dbReference type="ChiTaRS" id="Obox6">
    <property type="organism name" value="mouse"/>
</dbReference>
<dbReference type="PRO" id="PR:G3X9U1"/>
<dbReference type="Proteomes" id="UP000000589">
    <property type="component" value="Chromosome 7"/>
</dbReference>
<dbReference type="RNAct" id="G3X9U1">
    <property type="molecule type" value="protein"/>
</dbReference>
<dbReference type="Bgee" id="ENSMUSG00000041583">
    <property type="expression patterns" value="Expressed in cleaving embryo and 12 other cell types or tissues"/>
</dbReference>
<dbReference type="GO" id="GO:0005634">
    <property type="term" value="C:nucleus"/>
    <property type="evidence" value="ECO:0007669"/>
    <property type="project" value="UniProtKB-SubCell"/>
</dbReference>
<dbReference type="GO" id="GO:0003677">
    <property type="term" value="F:DNA binding"/>
    <property type="evidence" value="ECO:0007669"/>
    <property type="project" value="UniProtKB-KW"/>
</dbReference>
<dbReference type="GO" id="GO:0000981">
    <property type="term" value="F:DNA-binding transcription factor activity, RNA polymerase II-specific"/>
    <property type="evidence" value="ECO:0007669"/>
    <property type="project" value="InterPro"/>
</dbReference>
<dbReference type="CDD" id="cd00086">
    <property type="entry name" value="homeodomain"/>
    <property type="match status" value="1"/>
</dbReference>
<dbReference type="Gene3D" id="1.10.10.60">
    <property type="entry name" value="Homeodomain-like"/>
    <property type="match status" value="1"/>
</dbReference>
<dbReference type="InterPro" id="IPR050460">
    <property type="entry name" value="Distal-less_Homeobox_TF"/>
</dbReference>
<dbReference type="InterPro" id="IPR001356">
    <property type="entry name" value="HD"/>
</dbReference>
<dbReference type="InterPro" id="IPR017970">
    <property type="entry name" value="Homeobox_CS"/>
</dbReference>
<dbReference type="InterPro" id="IPR009057">
    <property type="entry name" value="Homeodomain-like_sf"/>
</dbReference>
<dbReference type="PANTHER" id="PTHR24327">
    <property type="entry name" value="HOMEOBOX PROTEIN"/>
    <property type="match status" value="1"/>
</dbReference>
<dbReference type="PANTHER" id="PTHR24327:SF87">
    <property type="entry name" value="OBOX1-RELATED"/>
    <property type="match status" value="1"/>
</dbReference>
<dbReference type="Pfam" id="PF00046">
    <property type="entry name" value="Homeodomain"/>
    <property type="match status" value="1"/>
</dbReference>
<dbReference type="SMART" id="SM00389">
    <property type="entry name" value="HOX"/>
    <property type="match status" value="1"/>
</dbReference>
<dbReference type="SUPFAM" id="SSF46689">
    <property type="entry name" value="Homeodomain-like"/>
    <property type="match status" value="1"/>
</dbReference>
<dbReference type="PROSITE" id="PS00027">
    <property type="entry name" value="HOMEOBOX_1"/>
    <property type="match status" value="1"/>
</dbReference>
<dbReference type="PROSITE" id="PS50071">
    <property type="entry name" value="HOMEOBOX_2"/>
    <property type="match status" value="1"/>
</dbReference>
<proteinExistence type="evidence at transcript level"/>
<name>OBOX6_MOUSE</name>
<feature type="chain" id="PRO_0000459215" description="Oocyte-specific homeobox protein 6">
    <location>
        <begin position="1"/>
        <end position="347"/>
    </location>
</feature>
<feature type="DNA-binding region" description="Homeobox" evidence="2">
    <location>
        <begin position="145"/>
        <end position="204"/>
    </location>
</feature>
<feature type="region of interest" description="Disordered" evidence="3">
    <location>
        <begin position="1"/>
        <end position="20"/>
    </location>
</feature>
<feature type="region of interest" description="Disordered" evidence="3">
    <location>
        <begin position="54"/>
        <end position="86"/>
    </location>
</feature>
<feature type="compositionally biased region" description="Polar residues" evidence="3">
    <location>
        <begin position="72"/>
        <end position="85"/>
    </location>
</feature>
<feature type="sequence conflict" description="In Ref. 3; AAI28025." evidence="7" ref="3">
    <original>A</original>
    <variation>G</variation>
    <location>
        <position position="26"/>
    </location>
</feature>
<feature type="sequence conflict" description="In Ref. 3; AAI28025." evidence="7" ref="3">
    <original>E</original>
    <variation>K</variation>
    <location>
        <position position="37"/>
    </location>
</feature>
<feature type="sequence conflict" description="In Ref. 3; AAI28025." evidence="7" ref="3">
    <original>M</original>
    <variation>V</variation>
    <location>
        <position position="46"/>
    </location>
</feature>
<feature type="sequence conflict" description="In Ref. 3; AAI28025." evidence="7" ref="3">
    <original>H</original>
    <variation>P</variation>
    <location>
        <position position="62"/>
    </location>
</feature>
<feature type="sequence conflict" description="In Ref. 3; AAI28025." evidence="7" ref="3">
    <original>RRV</original>
    <variation>QRI</variation>
    <location>
        <begin position="135"/>
        <end position="137"/>
    </location>
</feature>
<feature type="sequence conflict" description="In Ref. 3; AAI28025." evidence="7" ref="3">
    <original>H</original>
    <variation>Q</variation>
    <location>
        <position position="145"/>
    </location>
</feature>
<feature type="sequence conflict" description="In Ref. 3; AAI28025." evidence="7" ref="3">
    <original>LK</original>
    <variation>PQ</variation>
    <location>
        <begin position="160"/>
        <end position="161"/>
    </location>
</feature>
<gene>
    <name evidence="6 8" type="primary">Obox6</name>
</gene>
<sequence length="347" mass="38380">MLQYNQSPHMPQDPSLHSKFQMSSSAPIEISFQMHQEPARNLPFQMCQSPLVIPRSPMQSSHSVPERDLCPQESQGPSGKSSIQMQPGLVMDPALPILRSLLMHSPHQIPSRSSVRAGFQGSLGPMVRSPSYGDRRVSLVTPRKHRKIRTVYTEEQKCVLKKHFHKCTYPSREQRMALAVLVGVTANEIQIWFKNHRAKSKRESLQNVPAALPETNGSSEAVSESVHFPDSLPVVASANGESMWSGTFGEDSIPNLNWSQESSPPHYQACDSARYCPQEYLLNGHAPVTAWNSGQSVAVEVQTGLAVAEAPVVMVASTQGPEYAQDSGPSTEELWQRVLEDFDELGD</sequence>
<comment type="function">
    <text evidence="1">Transcription factor required for zygotic genome activation (ZGA), a critical event in early embryonic development during which the developmental control passes from maternally provided mRNAs to the expression of the zygotic genome after fertilization.</text>
</comment>
<comment type="subcellular location">
    <subcellularLocation>
        <location evidence="2">Nucleus</location>
    </subcellularLocation>
</comment>
<comment type="tissue specificity">
    <text evidence="4 5">Specifically expressed in early embryos.</text>
</comment>
<comment type="developmental stage">
    <text evidence="4 5">Expressed zygotically with expression starting during major zygotic genome activation (ZGA) and peaking in four-cell stage embryos.</text>
</comment>
<comment type="disruption phenotype">
    <text evidence="4">No visible phenotype; mice are viable and fertile.</text>
</comment>
<comment type="similarity">
    <text evidence="7">Belongs to the paired homeobox family. Obox subfamily.</text>
</comment>
<comment type="sequence caution" evidence="7">
    <conflict type="erroneous gene model prediction">
        <sequence resource="EMBL-CDS" id="AAL68805"/>
    </conflict>
</comment>
<reference key="1">
    <citation type="journal article" date="2002" name="Genomics">
        <title>Obox, a family of homeobox genes preferentially expressed in germ cells.</title>
        <authorList>
            <person name="Rajkovic A."/>
            <person name="Yan C."/>
            <person name="Yan W."/>
            <person name="Klysik M."/>
            <person name="Matzuk M.M."/>
        </authorList>
    </citation>
    <scope>NUCLEOTIDE SEQUENCE [GENOMIC DNA]</scope>
    <source>
        <strain>C57BL/6J</strain>
    </source>
</reference>
<reference key="2">
    <citation type="journal article" date="2009" name="PLoS Biol.">
        <title>Lineage-specific biology revealed by a finished genome assembly of the mouse.</title>
        <authorList>
            <person name="Church D.M."/>
            <person name="Goodstadt L."/>
            <person name="Hillier L.W."/>
            <person name="Zody M.C."/>
            <person name="Goldstein S."/>
            <person name="She X."/>
            <person name="Bult C.J."/>
            <person name="Agarwala R."/>
            <person name="Cherry J.L."/>
            <person name="DiCuccio M."/>
            <person name="Hlavina W."/>
            <person name="Kapustin Y."/>
            <person name="Meric P."/>
            <person name="Maglott D."/>
            <person name="Birtle Z."/>
            <person name="Marques A.C."/>
            <person name="Graves T."/>
            <person name="Zhou S."/>
            <person name="Teague B."/>
            <person name="Potamousis K."/>
            <person name="Churas C."/>
            <person name="Place M."/>
            <person name="Herschleb J."/>
            <person name="Runnheim R."/>
            <person name="Forrest D."/>
            <person name="Amos-Landgraf J."/>
            <person name="Schwartz D.C."/>
            <person name="Cheng Z."/>
            <person name="Lindblad-Toh K."/>
            <person name="Eichler E.E."/>
            <person name="Ponting C.P."/>
        </authorList>
    </citation>
    <scope>NUCLEOTIDE SEQUENCE [LARGE SCALE GENOMIC DNA]</scope>
    <source>
        <strain>C57BL/6J</strain>
    </source>
</reference>
<reference key="3">
    <citation type="journal article" date="2004" name="Genome Res.">
        <title>The status, quality, and expansion of the NIH full-length cDNA project: the Mammalian Gene Collection (MGC).</title>
        <authorList>
            <consortium name="The MGC Project Team"/>
        </authorList>
    </citation>
    <scope>NUCLEOTIDE SEQUENCE [LARGE SCALE MRNA]</scope>
</reference>
<reference key="4">
    <citation type="journal article" date="2007" name="Dev. Dyn.">
        <title>Mice lacking the Obox6 homeobox gene undergo normal early embryonic development and are fertile.</title>
        <authorList>
            <person name="Cheng W.C."/>
            <person name="Hsieh-Li H.M."/>
            <person name="Yeh Y.J."/>
            <person name="Li H."/>
        </authorList>
    </citation>
    <scope>TISSUE SPECIFICITY</scope>
    <scope>DEVELOPMENTAL STAGE</scope>
    <scope>DISRUPTION PHENOTYPE</scope>
</reference>
<reference key="5">
    <citation type="journal article" date="2023" name="Nature">
        <title>OBOX regulates murine zygotic genome activation and early development.</title>
        <authorList>
            <person name="Ji S."/>
            <person name="Chen F."/>
            <person name="Stein P."/>
            <person name="Wang J."/>
            <person name="Zhou Z."/>
            <person name="Wang L."/>
            <person name="Zhao Q."/>
            <person name="Lin Z."/>
            <person name="Liu B."/>
            <person name="Xu K."/>
            <person name="Lai F."/>
            <person name="Xiong Z."/>
            <person name="Hu X."/>
            <person name="Kong T."/>
            <person name="Kong F."/>
            <person name="Huang B."/>
            <person name="Wang Q."/>
            <person name="Xu Q."/>
            <person name="Fan Q."/>
            <person name="Liu L."/>
            <person name="Williams C.J."/>
            <person name="Schultz R.M."/>
            <person name="Xie W."/>
        </authorList>
    </citation>
    <scope>TISSUE SPECIFICITY</scope>
    <scope>DEVELOPMENTAL STAGE</scope>
</reference>